<proteinExistence type="inferred from homology"/>
<protein>
    <recommendedName>
        <fullName evidence="2">Glutamine synthetase</fullName>
        <shortName evidence="2">GS</shortName>
        <ecNumber evidence="2">6.3.1.2</ecNumber>
    </recommendedName>
    <alternativeName>
        <fullName evidence="9">Glutamate--ammonia ligase</fullName>
    </alternativeName>
    <alternativeName>
        <fullName evidence="2">Glutamine synthetase I beta</fullName>
        <shortName evidence="2">GSI beta</shortName>
    </alternativeName>
</protein>
<reference key="1">
    <citation type="journal article" date="2001" name="Nature">
        <title>Genome sequence of enterohaemorrhagic Escherichia coli O157:H7.</title>
        <authorList>
            <person name="Perna N.T."/>
            <person name="Plunkett G. III"/>
            <person name="Burland V."/>
            <person name="Mau B."/>
            <person name="Glasner J.D."/>
            <person name="Rose D.J."/>
            <person name="Mayhew G.F."/>
            <person name="Evans P.S."/>
            <person name="Gregor J."/>
            <person name="Kirkpatrick H.A."/>
            <person name="Posfai G."/>
            <person name="Hackett J."/>
            <person name="Klink S."/>
            <person name="Boutin A."/>
            <person name="Shao Y."/>
            <person name="Miller L."/>
            <person name="Grotbeck E.J."/>
            <person name="Davis N.W."/>
            <person name="Lim A."/>
            <person name="Dimalanta E.T."/>
            <person name="Potamousis K."/>
            <person name="Apodaca J."/>
            <person name="Anantharaman T.S."/>
            <person name="Lin J."/>
            <person name="Yen G."/>
            <person name="Schwartz D.C."/>
            <person name="Welch R.A."/>
            <person name="Blattner F.R."/>
        </authorList>
    </citation>
    <scope>NUCLEOTIDE SEQUENCE [LARGE SCALE GENOMIC DNA]</scope>
    <source>
        <strain>O157:H7 / EDL933 / ATCC 700927 / EHEC</strain>
    </source>
</reference>
<reference key="2">
    <citation type="journal article" date="2001" name="DNA Res.">
        <title>Complete genome sequence of enterohemorrhagic Escherichia coli O157:H7 and genomic comparison with a laboratory strain K-12.</title>
        <authorList>
            <person name="Hayashi T."/>
            <person name="Makino K."/>
            <person name="Ohnishi M."/>
            <person name="Kurokawa K."/>
            <person name="Ishii K."/>
            <person name="Yokoyama K."/>
            <person name="Han C.-G."/>
            <person name="Ohtsubo E."/>
            <person name="Nakayama K."/>
            <person name="Murata T."/>
            <person name="Tanaka M."/>
            <person name="Tobe T."/>
            <person name="Iida T."/>
            <person name="Takami H."/>
            <person name="Honda T."/>
            <person name="Sasakawa C."/>
            <person name="Ogasawara N."/>
            <person name="Yasunaga T."/>
            <person name="Kuhara S."/>
            <person name="Shiba T."/>
            <person name="Hattori M."/>
            <person name="Shinagawa H."/>
        </authorList>
    </citation>
    <scope>NUCLEOTIDE SEQUENCE [LARGE SCALE GENOMIC DNA]</scope>
    <source>
        <strain>O157:H7 / Sakai / RIMD 0509952 / EHEC</strain>
    </source>
</reference>
<accession>P0A9C7</accession>
<accession>P06711</accession>
<comment type="function">
    <text evidence="2">Catalyzes the ATP-dependent biosynthesis of glutamine from glutamate and ammonia.</text>
</comment>
<comment type="catalytic activity">
    <reaction evidence="2">
        <text>L-glutamate + NH4(+) + ATP = L-glutamine + ADP + phosphate + H(+)</text>
        <dbReference type="Rhea" id="RHEA:16169"/>
        <dbReference type="ChEBI" id="CHEBI:15378"/>
        <dbReference type="ChEBI" id="CHEBI:28938"/>
        <dbReference type="ChEBI" id="CHEBI:29985"/>
        <dbReference type="ChEBI" id="CHEBI:30616"/>
        <dbReference type="ChEBI" id="CHEBI:43474"/>
        <dbReference type="ChEBI" id="CHEBI:58359"/>
        <dbReference type="ChEBI" id="CHEBI:456216"/>
        <dbReference type="EC" id="6.3.1.2"/>
    </reaction>
</comment>
<comment type="cofactor">
    <cofactor evidence="5">
        <name>Mg(2+)</name>
        <dbReference type="ChEBI" id="CHEBI:18420"/>
    </cofactor>
    <text evidence="5">Binds 2 Mg(2+) ions per subunit.</text>
</comment>
<comment type="activity regulation">
    <text evidence="6">The activity of this enzyme could be controlled by adenylation under conditions of abundant glutamine.</text>
</comment>
<comment type="subunit">
    <text evidence="2">Oligomer of 12 subunits arranged in the form of two hexameric ring.</text>
</comment>
<comment type="subcellular location">
    <subcellularLocation>
        <location evidence="5">Cytoplasm</location>
    </subcellularLocation>
</comment>
<comment type="similarity">
    <text evidence="9">Belongs to the glutamine synthetase family.</text>
</comment>
<name>GLN1B_ECO57</name>
<evidence type="ECO:0000250" key="1"/>
<evidence type="ECO:0000250" key="2">
    <source>
        <dbReference type="UniProtKB" id="P0A1P6"/>
    </source>
</evidence>
<evidence type="ECO:0000250" key="3">
    <source>
        <dbReference type="UniProtKB" id="P12425"/>
    </source>
</evidence>
<evidence type="ECO:0000250" key="4">
    <source>
        <dbReference type="UniProtKB" id="P77961"/>
    </source>
</evidence>
<evidence type="ECO:0000250" key="5">
    <source>
        <dbReference type="UniProtKB" id="P9WN39"/>
    </source>
</evidence>
<evidence type="ECO:0000250" key="6">
    <source>
        <dbReference type="UniProtKB" id="Q3V5W6"/>
    </source>
</evidence>
<evidence type="ECO:0000255" key="7">
    <source>
        <dbReference type="PROSITE-ProRule" id="PRU01330"/>
    </source>
</evidence>
<evidence type="ECO:0000255" key="8">
    <source>
        <dbReference type="PROSITE-ProRule" id="PRU01331"/>
    </source>
</evidence>
<evidence type="ECO:0000305" key="9"/>
<keyword id="KW-0067">ATP-binding</keyword>
<keyword id="KW-0963">Cytoplasm</keyword>
<keyword id="KW-0436">Ligase</keyword>
<keyword id="KW-0460">Magnesium</keyword>
<keyword id="KW-0479">Metal-binding</keyword>
<keyword id="KW-0547">Nucleotide-binding</keyword>
<keyword id="KW-0597">Phosphoprotein</keyword>
<keyword id="KW-1185">Reference proteome</keyword>
<sequence length="469" mass="51904">MSAEHVLTMLNEHEVKFVDLRFTDTKGKEQHVTIPAHQVNAEFFEEGKMFDGSSIGGWKGINESDMVLMPDASTAVIDPFFADSTLIIRCDILEPGTLQGYDRDPRSIAKRAEDYLRSTGIADTVLFGPEPEFFLFDDIRFGSSISGSHVAIDDIEGAWNSSTQYEGGNKGHRPAVKGGYFPVPPVDSAQDIRSEMCLVMEQMGLVVEAHHHEVATAGQNEVATRFNTMTKKADEIQIYKYVVHNVAHRFGKTATFMPKPMFGDNGSGMHCHMSLSKNGVNLFAGDKYAGLSEQALYYIGGVIKHAKAINALANPTTNSYKRLVPGYEAPVMLAYSARNRSASIRIPVVSSPKARRIEVRFPDPAANPYLCFAALLMAGLDGIKNKIHPGEAMDKNLYDLPPEEAKEIPQVAGSLEEALNELDLDREFLKAGGVFTDEAIDAYIALRREEDDRVRMTPHPVEFELYYSV</sequence>
<dbReference type="EC" id="6.3.1.2" evidence="2"/>
<dbReference type="EMBL" id="AE005174">
    <property type="protein sequence ID" value="AAG59059.1"/>
    <property type="molecule type" value="Genomic_DNA"/>
</dbReference>
<dbReference type="EMBL" id="BA000007">
    <property type="protein sequence ID" value="BAB38215.1"/>
    <property type="molecule type" value="Genomic_DNA"/>
</dbReference>
<dbReference type="PIR" id="H91227">
    <property type="entry name" value="H91227"/>
</dbReference>
<dbReference type="RefSeq" id="NP_312819.1">
    <property type="nucleotide sequence ID" value="NC_002695.1"/>
</dbReference>
<dbReference type="RefSeq" id="WP_001271717.1">
    <property type="nucleotide sequence ID" value="NZ_VOAI01000016.1"/>
</dbReference>
<dbReference type="SMR" id="P0A9C7"/>
<dbReference type="STRING" id="155864.Z5406"/>
<dbReference type="GeneID" id="915103"/>
<dbReference type="GeneID" id="93778066"/>
<dbReference type="KEGG" id="ece:Z5406"/>
<dbReference type="KEGG" id="ecs:ECs_4792"/>
<dbReference type="PATRIC" id="fig|386585.9.peg.5006"/>
<dbReference type="eggNOG" id="COG0174">
    <property type="taxonomic scope" value="Bacteria"/>
</dbReference>
<dbReference type="HOGENOM" id="CLU_017290_1_2_6"/>
<dbReference type="OMA" id="PHPHEFE"/>
<dbReference type="Proteomes" id="UP000000558">
    <property type="component" value="Chromosome"/>
</dbReference>
<dbReference type="Proteomes" id="UP000002519">
    <property type="component" value="Chromosome"/>
</dbReference>
<dbReference type="GO" id="GO:0005737">
    <property type="term" value="C:cytoplasm"/>
    <property type="evidence" value="ECO:0007669"/>
    <property type="project" value="UniProtKB-SubCell"/>
</dbReference>
<dbReference type="GO" id="GO:0016020">
    <property type="term" value="C:membrane"/>
    <property type="evidence" value="ECO:0007669"/>
    <property type="project" value="TreeGrafter"/>
</dbReference>
<dbReference type="GO" id="GO:0005524">
    <property type="term" value="F:ATP binding"/>
    <property type="evidence" value="ECO:0007669"/>
    <property type="project" value="UniProtKB-KW"/>
</dbReference>
<dbReference type="GO" id="GO:0004356">
    <property type="term" value="F:glutamine synthetase activity"/>
    <property type="evidence" value="ECO:0007669"/>
    <property type="project" value="UniProtKB-EC"/>
</dbReference>
<dbReference type="GO" id="GO:0046872">
    <property type="term" value="F:metal ion binding"/>
    <property type="evidence" value="ECO:0007669"/>
    <property type="project" value="UniProtKB-KW"/>
</dbReference>
<dbReference type="GO" id="GO:0006542">
    <property type="term" value="P:glutamine biosynthetic process"/>
    <property type="evidence" value="ECO:0007669"/>
    <property type="project" value="InterPro"/>
</dbReference>
<dbReference type="GO" id="GO:0019740">
    <property type="term" value="P:nitrogen utilization"/>
    <property type="evidence" value="ECO:0007669"/>
    <property type="project" value="TreeGrafter"/>
</dbReference>
<dbReference type="FunFam" id="3.10.20.70:FF:000001">
    <property type="entry name" value="Glutamine synthetase"/>
    <property type="match status" value="1"/>
</dbReference>
<dbReference type="FunFam" id="3.30.590.10:FF:000001">
    <property type="entry name" value="Glutamine synthetase"/>
    <property type="match status" value="1"/>
</dbReference>
<dbReference type="Gene3D" id="3.10.20.70">
    <property type="entry name" value="Glutamine synthetase, N-terminal domain"/>
    <property type="match status" value="1"/>
</dbReference>
<dbReference type="Gene3D" id="3.30.590.10">
    <property type="entry name" value="Glutamine synthetase/guanido kinase, catalytic domain"/>
    <property type="match status" value="1"/>
</dbReference>
<dbReference type="InterPro" id="IPR008147">
    <property type="entry name" value="Gln_synt_N"/>
</dbReference>
<dbReference type="InterPro" id="IPR036651">
    <property type="entry name" value="Gln_synt_N_sf"/>
</dbReference>
<dbReference type="InterPro" id="IPR014746">
    <property type="entry name" value="Gln_synth/guanido_kin_cat_dom"/>
</dbReference>
<dbReference type="InterPro" id="IPR008146">
    <property type="entry name" value="Gln_synth_cat_dom"/>
</dbReference>
<dbReference type="InterPro" id="IPR027303">
    <property type="entry name" value="Gln_synth_gly_rich_site"/>
</dbReference>
<dbReference type="InterPro" id="IPR004809">
    <property type="entry name" value="Gln_synth_I"/>
</dbReference>
<dbReference type="InterPro" id="IPR001637">
    <property type="entry name" value="Gln_synth_I_adenylation_site"/>
</dbReference>
<dbReference type="InterPro" id="IPR027302">
    <property type="entry name" value="Gln_synth_N_conserv_site"/>
</dbReference>
<dbReference type="NCBIfam" id="TIGR00653">
    <property type="entry name" value="GlnA"/>
    <property type="match status" value="1"/>
</dbReference>
<dbReference type="NCBIfam" id="NF007006">
    <property type="entry name" value="PRK09469.1"/>
    <property type="match status" value="1"/>
</dbReference>
<dbReference type="PANTHER" id="PTHR43407">
    <property type="entry name" value="GLUTAMINE SYNTHETASE"/>
    <property type="match status" value="1"/>
</dbReference>
<dbReference type="PANTHER" id="PTHR43407:SF2">
    <property type="entry name" value="GLUTAMINE SYNTHETASE"/>
    <property type="match status" value="1"/>
</dbReference>
<dbReference type="Pfam" id="PF00120">
    <property type="entry name" value="Gln-synt_C"/>
    <property type="match status" value="1"/>
</dbReference>
<dbReference type="Pfam" id="PF03951">
    <property type="entry name" value="Gln-synt_N"/>
    <property type="match status" value="1"/>
</dbReference>
<dbReference type="SMART" id="SM01230">
    <property type="entry name" value="Gln-synt_C"/>
    <property type="match status" value="1"/>
</dbReference>
<dbReference type="SUPFAM" id="SSF54368">
    <property type="entry name" value="Glutamine synthetase, N-terminal domain"/>
    <property type="match status" value="1"/>
</dbReference>
<dbReference type="SUPFAM" id="SSF55931">
    <property type="entry name" value="Glutamine synthetase/guanido kinase"/>
    <property type="match status" value="1"/>
</dbReference>
<dbReference type="PROSITE" id="PS00180">
    <property type="entry name" value="GLNA_1"/>
    <property type="match status" value="1"/>
</dbReference>
<dbReference type="PROSITE" id="PS00182">
    <property type="entry name" value="GLNA_ADENYLATION"/>
    <property type="match status" value="1"/>
</dbReference>
<dbReference type="PROSITE" id="PS00181">
    <property type="entry name" value="GLNA_ATP"/>
    <property type="match status" value="1"/>
</dbReference>
<dbReference type="PROSITE" id="PS51986">
    <property type="entry name" value="GS_BETA_GRASP"/>
    <property type="match status" value="1"/>
</dbReference>
<dbReference type="PROSITE" id="PS51987">
    <property type="entry name" value="GS_CATALYTIC"/>
    <property type="match status" value="1"/>
</dbReference>
<gene>
    <name evidence="2" type="primary">glnA</name>
    <name type="ordered locus">Z5406</name>
    <name type="ordered locus">ECs4792</name>
</gene>
<organism>
    <name type="scientific">Escherichia coli O157:H7</name>
    <dbReference type="NCBI Taxonomy" id="83334"/>
    <lineage>
        <taxon>Bacteria</taxon>
        <taxon>Pseudomonadati</taxon>
        <taxon>Pseudomonadota</taxon>
        <taxon>Gammaproteobacteria</taxon>
        <taxon>Enterobacterales</taxon>
        <taxon>Enterobacteriaceae</taxon>
        <taxon>Escherichia</taxon>
    </lineage>
</organism>
<feature type="initiator methionine" description="Removed" evidence="1">
    <location>
        <position position="1"/>
    </location>
</feature>
<feature type="chain" id="PRO_0000153236" description="Glutamine synthetase">
    <location>
        <begin position="2"/>
        <end position="469"/>
    </location>
</feature>
<feature type="domain" description="GS beta-grasp" evidence="7">
    <location>
        <begin position="13"/>
        <end position="97"/>
    </location>
</feature>
<feature type="domain" description="GS catalytic" evidence="8">
    <location>
        <begin position="105"/>
        <end position="469"/>
    </location>
</feature>
<feature type="binding site" evidence="5">
    <location>
        <position position="130"/>
    </location>
    <ligand>
        <name>Mg(2+)</name>
        <dbReference type="ChEBI" id="CHEBI:18420"/>
        <label>1</label>
    </ligand>
</feature>
<feature type="binding site" evidence="5">
    <location>
        <position position="132"/>
    </location>
    <ligand>
        <name>Mg(2+)</name>
        <dbReference type="ChEBI" id="CHEBI:18420"/>
        <label>2</label>
    </ligand>
</feature>
<feature type="binding site" evidence="2">
    <location>
        <position position="208"/>
    </location>
    <ligand>
        <name>ATP</name>
        <dbReference type="ChEBI" id="CHEBI:30616"/>
    </ligand>
</feature>
<feature type="binding site" evidence="5">
    <location>
        <position position="213"/>
    </location>
    <ligand>
        <name>Mg(2+)</name>
        <dbReference type="ChEBI" id="CHEBI:18420"/>
        <label>2</label>
    </ligand>
</feature>
<feature type="binding site" evidence="5">
    <location>
        <position position="221"/>
    </location>
    <ligand>
        <name>Mg(2+)</name>
        <dbReference type="ChEBI" id="CHEBI:18420"/>
        <label>2</label>
    </ligand>
</feature>
<feature type="binding site" evidence="2">
    <location>
        <begin position="265"/>
        <end position="266"/>
    </location>
    <ligand>
        <name>L-glutamate</name>
        <dbReference type="ChEBI" id="CHEBI:29985"/>
    </ligand>
</feature>
<feature type="binding site" evidence="3">
    <location>
        <position position="266"/>
    </location>
    <ligand>
        <name>L-glutamate</name>
        <dbReference type="ChEBI" id="CHEBI:29985"/>
    </ligand>
</feature>
<feature type="binding site" evidence="5">
    <location>
        <position position="270"/>
    </location>
    <ligand>
        <name>Mg(2+)</name>
        <dbReference type="ChEBI" id="CHEBI:18420"/>
        <label>1</label>
    </ligand>
</feature>
<feature type="binding site" evidence="2">
    <location>
        <begin position="272"/>
        <end position="274"/>
    </location>
    <ligand>
        <name>ATP</name>
        <dbReference type="ChEBI" id="CHEBI:30616"/>
    </ligand>
</feature>
<feature type="binding site" evidence="4">
    <location>
        <position position="274"/>
    </location>
    <ligand>
        <name>ATP</name>
        <dbReference type="ChEBI" id="CHEBI:30616"/>
    </ligand>
</feature>
<feature type="binding site" evidence="2">
    <location>
        <position position="322"/>
    </location>
    <ligand>
        <name>L-glutamate</name>
        <dbReference type="ChEBI" id="CHEBI:29985"/>
    </ligand>
</feature>
<feature type="binding site" evidence="2">
    <location>
        <position position="328"/>
    </location>
    <ligand>
        <name>L-glutamate</name>
        <dbReference type="ChEBI" id="CHEBI:29985"/>
    </ligand>
</feature>
<feature type="binding site" evidence="5">
    <location>
        <position position="340"/>
    </location>
    <ligand>
        <name>ATP</name>
        <dbReference type="ChEBI" id="CHEBI:30616"/>
    </ligand>
</feature>
<feature type="binding site" evidence="5">
    <location>
        <position position="340"/>
    </location>
    <ligand>
        <name>L-glutamate</name>
        <dbReference type="ChEBI" id="CHEBI:29985"/>
    </ligand>
</feature>
<feature type="binding site" evidence="5">
    <location>
        <position position="345"/>
    </location>
    <ligand>
        <name>ATP</name>
        <dbReference type="ChEBI" id="CHEBI:30616"/>
    </ligand>
</feature>
<feature type="binding site" evidence="4">
    <location>
        <position position="353"/>
    </location>
    <ligand>
        <name>ATP</name>
        <dbReference type="ChEBI" id="CHEBI:30616"/>
    </ligand>
</feature>
<feature type="binding site" evidence="5">
    <location>
        <position position="358"/>
    </location>
    <ligand>
        <name>Mg(2+)</name>
        <dbReference type="ChEBI" id="CHEBI:18420"/>
        <label>1</label>
    </ligand>
</feature>
<feature type="binding site" evidence="2">
    <location>
        <position position="360"/>
    </location>
    <ligand>
        <name>L-glutamate</name>
        <dbReference type="ChEBI" id="CHEBI:29985"/>
    </ligand>
</feature>
<feature type="modified residue" description="O-AMP-tyrosine" evidence="5">
    <location>
        <position position="398"/>
    </location>
</feature>